<evidence type="ECO:0000255" key="1">
    <source>
        <dbReference type="HAMAP-Rule" id="MF_00377"/>
    </source>
</evidence>
<evidence type="ECO:0000269" key="2">
    <source>
    </source>
</evidence>
<evidence type="ECO:0000305" key="3"/>
<evidence type="ECO:0007744" key="4">
    <source>
        <dbReference type="PDB" id="2Z4R"/>
    </source>
</evidence>
<evidence type="ECO:0007744" key="5">
    <source>
        <dbReference type="PDB" id="2Z4S"/>
    </source>
</evidence>
<evidence type="ECO:0007829" key="6">
    <source>
        <dbReference type="PDB" id="2Z4R"/>
    </source>
</evidence>
<evidence type="ECO:0007829" key="7">
    <source>
        <dbReference type="PDB" id="2Z4S"/>
    </source>
</evidence>
<sequence length="440" mass="50304">MKERILQEIKTRVNRKSWELWFSSFDVKSIEGNKVVFSVGNLFIKEWLEKKYYSVLSKAVKVVLGNDATFEITYEAFEPHSSYSEPLVKKRAVLLTPLNPDYTFENFVVGPGNSFAYHAALEVAKHPGRYNPLFIYGGVGLGKTHLLQSIGNYVVQNEPDLRVMYITSEKFLNDLVDSMKEGKLNEFREKYRKKVDILLIDDVQFLIGKTGVQTELFHTFNELHDSGKQIVICSDREPQKLSEFQDRLVSRFQMGLVAKLEPPDEETRKSIARKMLEIEHGELPEEVLNFVAENVDDNLRRLRGAIIKLLVYKETTGKEVDLKEAILLLKDFIKPNRVKAMDPIDELIEIVAKVTGVPREEILSNSRNVKALTARRIGMYVAKNYLKSSLRTIAEKFNRSHPVVVDSVKKVKDSLLKGNKQLKALIDEVIGEISRRALSG</sequence>
<organism>
    <name type="scientific">Thermotoga maritima (strain ATCC 43589 / DSM 3109 / JCM 10099 / NBRC 100826 / MSB8)</name>
    <dbReference type="NCBI Taxonomy" id="243274"/>
    <lineage>
        <taxon>Bacteria</taxon>
        <taxon>Thermotogati</taxon>
        <taxon>Thermotogota</taxon>
        <taxon>Thermotogae</taxon>
        <taxon>Thermotogales</taxon>
        <taxon>Thermotogaceae</taxon>
        <taxon>Thermotoga</taxon>
    </lineage>
</organism>
<reference key="1">
    <citation type="journal article" date="1994" name="EMBO J.">
        <title>Sequence, assembly and evolution of a primordial ferredoxin from Thermotoga maritima.</title>
        <authorList>
            <person name="Darimont B."/>
            <person name="Sterner R."/>
        </authorList>
    </citation>
    <scope>NUCLEOTIDE SEQUENCE [GENOMIC DNA]</scope>
    <source>
        <strain>ATCC 43589 / DSM 3109 / JCM 10099 / NBRC 100826 / MSB8</strain>
    </source>
</reference>
<reference key="2">
    <citation type="journal article" date="1999" name="Nature">
        <title>Evidence for lateral gene transfer between Archaea and Bacteria from genome sequence of Thermotoga maritima.</title>
        <authorList>
            <person name="Nelson K.E."/>
            <person name="Clayton R.A."/>
            <person name="Gill S.R."/>
            <person name="Gwinn M.L."/>
            <person name="Dodson R.J."/>
            <person name="Haft D.H."/>
            <person name="Hickey E.K."/>
            <person name="Peterson J.D."/>
            <person name="Nelson W.C."/>
            <person name="Ketchum K.A."/>
            <person name="McDonald L.A."/>
            <person name="Utterback T.R."/>
            <person name="Malek J.A."/>
            <person name="Linher K.D."/>
            <person name="Garrett M.M."/>
            <person name="Stewart A.M."/>
            <person name="Cotton M.D."/>
            <person name="Pratt M.S."/>
            <person name="Phillips C.A."/>
            <person name="Richardson D.L."/>
            <person name="Heidelberg J.F."/>
            <person name="Sutton G.G."/>
            <person name="Fleischmann R.D."/>
            <person name="Eisen J.A."/>
            <person name="White O."/>
            <person name="Salzberg S.L."/>
            <person name="Smith H.O."/>
            <person name="Venter J.C."/>
            <person name="Fraser C.M."/>
        </authorList>
    </citation>
    <scope>NUCLEOTIDE SEQUENCE [LARGE SCALE GENOMIC DNA]</scope>
    <source>
        <strain>ATCC 43589 / DSM 3109 / JCM 10099 / NBRC 100826 / MSB8</strain>
    </source>
</reference>
<reference evidence="4 5" key="3">
    <citation type="journal article" date="2008" name="J. Biol. Chem.">
        <title>A common mechanism for the ATP-DnaA-dependent formation of open complexes at the replication origin.</title>
        <authorList>
            <person name="Ozaki S."/>
            <person name="Kawakami H."/>
            <person name="Nakamura K."/>
            <person name="Fujikawa N."/>
            <person name="Kagawa W."/>
            <person name="Park S.Y."/>
            <person name="Yokoyama S."/>
            <person name="Kurumizaka H."/>
            <person name="Katayama T."/>
        </authorList>
    </citation>
    <scope>X-RAY CRYSTALLOGRAPHY (3.00 ANGSTROMS) IN COMPLEX WITH ADP AND MG(2+)</scope>
    <scope>FUNCTION</scope>
    <scope>SUBUNIT</scope>
    <scope>MUTAGENESIS OF VAL-176; MET-179; LYS-180 AND LYS-209</scope>
    <scope>ATP-BINDING</scope>
    <scope>DNA-BINDING</scope>
</reference>
<gene>
    <name evidence="1" type="primary">dnaA</name>
    <name type="ordered locus">TM_0926</name>
</gene>
<proteinExistence type="evidence at protein level"/>
<dbReference type="EMBL" id="U24145">
    <property type="protein sequence ID" value="AAA65438.1"/>
    <property type="molecule type" value="Genomic_DNA"/>
</dbReference>
<dbReference type="EMBL" id="AE000512">
    <property type="protein sequence ID" value="AAD36007.1"/>
    <property type="molecule type" value="Genomic_DNA"/>
</dbReference>
<dbReference type="PIR" id="G72317">
    <property type="entry name" value="G72317"/>
</dbReference>
<dbReference type="RefSeq" id="NP_228734.1">
    <property type="nucleotide sequence ID" value="NC_000853.1"/>
</dbReference>
<dbReference type="RefSeq" id="WP_004080636.1">
    <property type="nucleotide sequence ID" value="NC_000853.1"/>
</dbReference>
<dbReference type="PDB" id="2Z4R">
    <property type="method" value="X-ray"/>
    <property type="resolution" value="3.05 A"/>
    <property type="chains" value="A/B/C=1-440"/>
</dbReference>
<dbReference type="PDB" id="2Z4S">
    <property type="method" value="X-ray"/>
    <property type="resolution" value="3.00 A"/>
    <property type="chains" value="A=1-440"/>
</dbReference>
<dbReference type="PDBsum" id="2Z4R"/>
<dbReference type="PDBsum" id="2Z4S"/>
<dbReference type="SMR" id="P46798"/>
<dbReference type="FunCoup" id="P46798">
    <property type="interactions" value="318"/>
</dbReference>
<dbReference type="STRING" id="243274.TM_0926"/>
<dbReference type="PaxDb" id="243274-THEMA_00005"/>
<dbReference type="EnsemblBacteria" id="AAD36007">
    <property type="protein sequence ID" value="AAD36007"/>
    <property type="gene ID" value="TM_0926"/>
</dbReference>
<dbReference type="KEGG" id="tma:TM0926"/>
<dbReference type="KEGG" id="tmi:THEMA_00005"/>
<dbReference type="KEGG" id="tmm:Tmari_0928"/>
<dbReference type="KEGG" id="tmw:THMA_0948"/>
<dbReference type="eggNOG" id="COG0593">
    <property type="taxonomic scope" value="Bacteria"/>
</dbReference>
<dbReference type="InParanoid" id="P46798"/>
<dbReference type="OrthoDB" id="9807019at2"/>
<dbReference type="EvolutionaryTrace" id="P46798"/>
<dbReference type="PRO" id="PR:P46798"/>
<dbReference type="Proteomes" id="UP000008183">
    <property type="component" value="Chromosome"/>
</dbReference>
<dbReference type="GO" id="GO:0005737">
    <property type="term" value="C:cytoplasm"/>
    <property type="evidence" value="ECO:0007669"/>
    <property type="project" value="UniProtKB-SubCell"/>
</dbReference>
<dbReference type="GO" id="GO:0005886">
    <property type="term" value="C:plasma membrane"/>
    <property type="evidence" value="ECO:0000318"/>
    <property type="project" value="GO_Central"/>
</dbReference>
<dbReference type="GO" id="GO:0005524">
    <property type="term" value="F:ATP binding"/>
    <property type="evidence" value="ECO:0007669"/>
    <property type="project" value="UniProtKB-UniRule"/>
</dbReference>
<dbReference type="GO" id="GO:0016887">
    <property type="term" value="F:ATP hydrolysis activity"/>
    <property type="evidence" value="ECO:0007669"/>
    <property type="project" value="InterPro"/>
</dbReference>
<dbReference type="GO" id="GO:0003688">
    <property type="term" value="F:DNA replication origin binding"/>
    <property type="evidence" value="ECO:0000318"/>
    <property type="project" value="GO_Central"/>
</dbReference>
<dbReference type="GO" id="GO:0008289">
    <property type="term" value="F:lipid binding"/>
    <property type="evidence" value="ECO:0007669"/>
    <property type="project" value="UniProtKB-KW"/>
</dbReference>
<dbReference type="GO" id="GO:0006260">
    <property type="term" value="P:DNA replication"/>
    <property type="evidence" value="ECO:0000318"/>
    <property type="project" value="GO_Central"/>
</dbReference>
<dbReference type="GO" id="GO:0006270">
    <property type="term" value="P:DNA replication initiation"/>
    <property type="evidence" value="ECO:0000318"/>
    <property type="project" value="GO_Central"/>
</dbReference>
<dbReference type="GO" id="GO:0006275">
    <property type="term" value="P:regulation of DNA replication"/>
    <property type="evidence" value="ECO:0007669"/>
    <property type="project" value="UniProtKB-UniRule"/>
</dbReference>
<dbReference type="CDD" id="cd00009">
    <property type="entry name" value="AAA"/>
    <property type="match status" value="1"/>
</dbReference>
<dbReference type="CDD" id="cd06571">
    <property type="entry name" value="Bac_DnaA_C"/>
    <property type="match status" value="1"/>
</dbReference>
<dbReference type="FunFam" id="1.10.8.60:FF:000349">
    <property type="entry name" value="Chromosomal replication initiator protein DnaA"/>
    <property type="match status" value="1"/>
</dbReference>
<dbReference type="FunFam" id="3.40.50.300:FF:000668">
    <property type="entry name" value="Chromosomal replication initiator protein DnaA"/>
    <property type="match status" value="1"/>
</dbReference>
<dbReference type="Gene3D" id="1.10.1750.10">
    <property type="match status" value="1"/>
</dbReference>
<dbReference type="Gene3D" id="1.10.8.60">
    <property type="match status" value="1"/>
</dbReference>
<dbReference type="Gene3D" id="3.30.300.180">
    <property type="match status" value="1"/>
</dbReference>
<dbReference type="Gene3D" id="3.40.50.300">
    <property type="entry name" value="P-loop containing nucleotide triphosphate hydrolases"/>
    <property type="match status" value="1"/>
</dbReference>
<dbReference type="HAMAP" id="MF_00377">
    <property type="entry name" value="DnaA_bact"/>
    <property type="match status" value="1"/>
</dbReference>
<dbReference type="InterPro" id="IPR003593">
    <property type="entry name" value="AAA+_ATPase"/>
</dbReference>
<dbReference type="InterPro" id="IPR001957">
    <property type="entry name" value="Chromosome_initiator_DnaA"/>
</dbReference>
<dbReference type="InterPro" id="IPR020591">
    <property type="entry name" value="Chromosome_initiator_DnaA-like"/>
</dbReference>
<dbReference type="InterPro" id="IPR018312">
    <property type="entry name" value="Chromosome_initiator_DnaA_CS"/>
</dbReference>
<dbReference type="InterPro" id="IPR013159">
    <property type="entry name" value="DnaA_C"/>
</dbReference>
<dbReference type="InterPro" id="IPR013317">
    <property type="entry name" value="DnaA_dom"/>
</dbReference>
<dbReference type="InterPro" id="IPR024633">
    <property type="entry name" value="DnaA_N_dom"/>
</dbReference>
<dbReference type="InterPro" id="IPR038454">
    <property type="entry name" value="DnaA_N_sf"/>
</dbReference>
<dbReference type="InterPro" id="IPR027417">
    <property type="entry name" value="P-loop_NTPase"/>
</dbReference>
<dbReference type="InterPro" id="IPR010921">
    <property type="entry name" value="Trp_repressor/repl_initiator"/>
</dbReference>
<dbReference type="NCBIfam" id="TIGR00362">
    <property type="entry name" value="DnaA"/>
    <property type="match status" value="1"/>
</dbReference>
<dbReference type="PANTHER" id="PTHR30050">
    <property type="entry name" value="CHROMOSOMAL REPLICATION INITIATOR PROTEIN DNAA"/>
    <property type="match status" value="1"/>
</dbReference>
<dbReference type="PANTHER" id="PTHR30050:SF2">
    <property type="entry name" value="CHROMOSOMAL REPLICATION INITIATOR PROTEIN DNAA"/>
    <property type="match status" value="1"/>
</dbReference>
<dbReference type="Pfam" id="PF00308">
    <property type="entry name" value="Bac_DnaA"/>
    <property type="match status" value="1"/>
</dbReference>
<dbReference type="Pfam" id="PF08299">
    <property type="entry name" value="Bac_DnaA_C"/>
    <property type="match status" value="1"/>
</dbReference>
<dbReference type="Pfam" id="PF11638">
    <property type="entry name" value="DnaA_N"/>
    <property type="match status" value="1"/>
</dbReference>
<dbReference type="PRINTS" id="PR00051">
    <property type="entry name" value="DNAA"/>
</dbReference>
<dbReference type="SMART" id="SM00382">
    <property type="entry name" value="AAA"/>
    <property type="match status" value="1"/>
</dbReference>
<dbReference type="SMART" id="SM00760">
    <property type="entry name" value="Bac_DnaA_C"/>
    <property type="match status" value="1"/>
</dbReference>
<dbReference type="SUPFAM" id="SSF52540">
    <property type="entry name" value="P-loop containing nucleoside triphosphate hydrolases"/>
    <property type="match status" value="1"/>
</dbReference>
<dbReference type="SUPFAM" id="SSF48295">
    <property type="entry name" value="TrpR-like"/>
    <property type="match status" value="1"/>
</dbReference>
<dbReference type="PROSITE" id="PS01008">
    <property type="entry name" value="DNAA"/>
    <property type="match status" value="1"/>
</dbReference>
<keyword id="KW-0002">3D-structure</keyword>
<keyword id="KW-0067">ATP-binding</keyword>
<keyword id="KW-0963">Cytoplasm</keyword>
<keyword id="KW-0235">DNA replication</keyword>
<keyword id="KW-0238">DNA-binding</keyword>
<keyword id="KW-0446">Lipid-binding</keyword>
<keyword id="KW-0547">Nucleotide-binding</keyword>
<keyword id="KW-1185">Reference proteome</keyword>
<protein>
    <recommendedName>
        <fullName evidence="1">Chromosomal replication initiator protein DnaA</fullName>
    </recommendedName>
</protein>
<feature type="chain" id="PRO_0000114286" description="Chromosomal replication initiator protein DnaA">
    <location>
        <begin position="1"/>
        <end position="440"/>
    </location>
</feature>
<feature type="region of interest" description="Domain I, interacts with DnaA modulators" evidence="1">
    <location>
        <begin position="1"/>
        <end position="69"/>
    </location>
</feature>
<feature type="region of interest" description="Domain II" evidence="1">
    <location>
        <begin position="69"/>
        <end position="96"/>
    </location>
</feature>
<feature type="region of interest" description="Domain III, AAA+ region" evidence="1">
    <location>
        <begin position="97"/>
        <end position="313"/>
    </location>
</feature>
<feature type="region of interest" description="Domain IV, binds dsDNA" evidence="1">
    <location>
        <begin position="314"/>
        <end position="440"/>
    </location>
</feature>
<feature type="binding site" evidence="4 5">
    <location>
        <position position="108"/>
    </location>
    <ligand>
        <name>ADP</name>
        <dbReference type="ChEBI" id="CHEBI:456216"/>
    </ligand>
</feature>
<feature type="binding site" evidence="4 5">
    <location>
        <position position="113"/>
    </location>
    <ligand>
        <name>ADP</name>
        <dbReference type="ChEBI" id="CHEBI:456216"/>
    </ligand>
</feature>
<feature type="binding site" evidence="4 5">
    <location>
        <position position="140"/>
    </location>
    <ligand>
        <name>ADP</name>
        <dbReference type="ChEBI" id="CHEBI:456216"/>
    </ligand>
</feature>
<feature type="binding site" evidence="1">
    <location>
        <position position="140"/>
    </location>
    <ligand>
        <name>ATP</name>
        <dbReference type="ChEBI" id="CHEBI:30616"/>
    </ligand>
</feature>
<feature type="binding site" evidence="4 5">
    <location>
        <position position="141"/>
    </location>
    <ligand>
        <name>ADP</name>
        <dbReference type="ChEBI" id="CHEBI:456216"/>
    </ligand>
</feature>
<feature type="binding site" evidence="4 5">
    <location>
        <position position="142"/>
    </location>
    <ligand>
        <name>ADP</name>
        <dbReference type="ChEBI" id="CHEBI:456216"/>
    </ligand>
</feature>
<feature type="binding site" evidence="1">
    <location>
        <position position="142"/>
    </location>
    <ligand>
        <name>ATP</name>
        <dbReference type="ChEBI" id="CHEBI:30616"/>
    </ligand>
</feature>
<feature type="binding site" evidence="4 5">
    <location>
        <position position="143"/>
    </location>
    <ligand>
        <name>ADP</name>
        <dbReference type="ChEBI" id="CHEBI:456216"/>
    </ligand>
</feature>
<feature type="binding site" evidence="1">
    <location>
        <position position="143"/>
    </location>
    <ligand>
        <name>ATP</name>
        <dbReference type="ChEBI" id="CHEBI:30616"/>
    </ligand>
</feature>
<feature type="binding site" evidence="4 5">
    <location>
        <position position="144"/>
    </location>
    <ligand>
        <name>ADP</name>
        <dbReference type="ChEBI" id="CHEBI:456216"/>
    </ligand>
</feature>
<feature type="binding site" evidence="1">
    <location>
        <position position="144"/>
    </location>
    <ligand>
        <name>ATP</name>
        <dbReference type="ChEBI" id="CHEBI:30616"/>
    </ligand>
</feature>
<feature type="binding site" evidence="4 5">
    <location>
        <position position="144"/>
    </location>
    <ligand>
        <name>Mg(2+)</name>
        <dbReference type="ChEBI" id="CHEBI:18420"/>
    </ligand>
</feature>
<feature type="binding site" evidence="4 5">
    <location>
        <position position="145"/>
    </location>
    <ligand>
        <name>ADP</name>
        <dbReference type="ChEBI" id="CHEBI:456216"/>
    </ligand>
</feature>
<feature type="binding site" evidence="4">
    <location>
        <position position="300"/>
    </location>
    <ligand>
        <name>ADP</name>
        <dbReference type="ChEBI" id="CHEBI:456216"/>
    </ligand>
</feature>
<feature type="mutagenesis site" description="Severe inhibition of oriC unwinding, ATP- and DNA-binding are wild-type." evidence="2">
    <original>V</original>
    <variation>A</variation>
    <location>
        <position position="176"/>
    </location>
</feature>
<feature type="mutagenesis site" description="Severe inhibition of oriC unwinding, ATP- and DNA-binding are wild-type." evidence="2">
    <original>M</original>
    <variation>A</variation>
    <location>
        <position position="179"/>
    </location>
</feature>
<feature type="mutagenesis site" description="Severe inhibition of oriC unwinding, ATP- and DNA-binding are wild-type." evidence="2">
    <original>K</original>
    <variation>A</variation>
    <location>
        <position position="180"/>
    </location>
</feature>
<feature type="mutagenesis site" description="Severe inhibition of oriC unwinding, ATP- and DNA-binding are wild-type." evidence="2">
    <original>K</original>
    <variation>A</variation>
    <location>
        <position position="209"/>
    </location>
</feature>
<feature type="helix" evidence="7">
    <location>
        <begin position="104"/>
        <end position="106"/>
    </location>
</feature>
<feature type="turn" evidence="7">
    <location>
        <begin position="111"/>
        <end position="113"/>
    </location>
</feature>
<feature type="helix" evidence="7">
    <location>
        <begin position="114"/>
        <end position="125"/>
    </location>
</feature>
<feature type="turn" evidence="6">
    <location>
        <begin position="127"/>
        <end position="129"/>
    </location>
</feature>
<feature type="strand" evidence="7">
    <location>
        <begin position="133"/>
        <end position="136"/>
    </location>
</feature>
<feature type="strand" evidence="7">
    <location>
        <begin position="138"/>
        <end position="142"/>
    </location>
</feature>
<feature type="helix" evidence="7">
    <location>
        <begin position="143"/>
        <end position="157"/>
    </location>
</feature>
<feature type="strand" evidence="6">
    <location>
        <begin position="158"/>
        <end position="161"/>
    </location>
</feature>
<feature type="strand" evidence="7">
    <location>
        <begin position="163"/>
        <end position="167"/>
    </location>
</feature>
<feature type="helix" evidence="7">
    <location>
        <begin position="168"/>
        <end position="180"/>
    </location>
</feature>
<feature type="helix" evidence="7">
    <location>
        <begin position="184"/>
        <end position="191"/>
    </location>
</feature>
<feature type="turn" evidence="7">
    <location>
        <begin position="192"/>
        <end position="194"/>
    </location>
</feature>
<feature type="strand" evidence="7">
    <location>
        <begin position="196"/>
        <end position="201"/>
    </location>
</feature>
<feature type="helix" evidence="7">
    <location>
        <begin position="203"/>
        <end position="206"/>
    </location>
</feature>
<feature type="helix" evidence="7">
    <location>
        <begin position="210"/>
        <end position="224"/>
    </location>
</feature>
<feature type="turn" evidence="7">
    <location>
        <begin position="225"/>
        <end position="227"/>
    </location>
</feature>
<feature type="strand" evidence="7">
    <location>
        <begin position="229"/>
        <end position="236"/>
    </location>
</feature>
<feature type="helix" evidence="7">
    <location>
        <begin position="238"/>
        <end position="240"/>
    </location>
</feature>
<feature type="helix" evidence="7">
    <location>
        <begin position="246"/>
        <end position="253"/>
    </location>
</feature>
<feature type="strand" evidence="7">
    <location>
        <begin position="254"/>
        <end position="256"/>
    </location>
</feature>
<feature type="helix" evidence="7">
    <location>
        <begin position="265"/>
        <end position="279"/>
    </location>
</feature>
<feature type="helix" evidence="7">
    <location>
        <begin position="287"/>
        <end position="294"/>
    </location>
</feature>
<feature type="helix" evidence="7">
    <location>
        <begin position="299"/>
        <end position="315"/>
    </location>
</feature>
<feature type="strand" evidence="7">
    <location>
        <begin position="316"/>
        <end position="318"/>
    </location>
</feature>
<feature type="helix" evidence="7">
    <location>
        <begin position="322"/>
        <end position="328"/>
    </location>
</feature>
<feature type="turn" evidence="7">
    <location>
        <begin position="331"/>
        <end position="333"/>
    </location>
</feature>
<comment type="function">
    <text evidence="1">Plays an essential role in the initiation and regulation of chromosomal replication. ATP-DnaA binds to the origin of replication (oriC) to initiate formation of the DNA replication initiation complex once per cell cycle. Binds the DnaA box (a 9 base pair repeat at the origin) and separates the double-stranded (ds)DNA. Forms a right-handed helical filament on oriC DNA; dsDNA binds to the exterior of the filament while single-stranded (ss)DNA is stabiized in the filament's interior. The ATP-DnaA-oriC complex binds and stabilizes one strand of the AT-rich DNA unwinding element (DUE), permitting loading of DNA polymerase. After initiation quickly degrades to an ADP-DnaA complex that is not apt for DNA replication. Binds acidic phospholipids.</text>
</comment>
<comment type="function">
    <text evidence="2">The DnaA box consensus is 5'-[ATC][AT]AC[CT]TACCA[CT][CTA]-3' in this bacterium (PubMed:18216012). Mutagenesis of residues that line the central pore blocks dsDNA separation (PubMed:18216012).</text>
</comment>
<comment type="subunit">
    <text evidence="1 2">Oligomerizes as a right-handed, spiral filament on DNA at oriC.</text>
</comment>
<comment type="subcellular location">
    <subcellularLocation>
        <location evidence="1">Cytoplasm</location>
    </subcellularLocation>
</comment>
<comment type="domain">
    <text evidence="1">Domain I is involved in oligomerization and binding regulators, domain II is flexibile and of varying length in different bacteria, domain III forms the AAA+ region, while domain IV binds dsDNA.</text>
</comment>
<comment type="similarity">
    <text evidence="1 3">Belongs to the DnaA family.</text>
</comment>
<accession>P46798</accession>
<name>DNAA_THEMA</name>